<gene>
    <name type="primary">cspA</name>
    <name type="ordered locus">SSP1349</name>
</gene>
<keyword id="KW-0963">Cytoplasm</keyword>
<keyword id="KW-1185">Reference proteome</keyword>
<protein>
    <recommendedName>
        <fullName>Cold shock protein CspA</fullName>
    </recommendedName>
</protein>
<evidence type="ECO:0000250" key="1"/>
<dbReference type="EMBL" id="AP008934">
    <property type="protein sequence ID" value="BAE18494.1"/>
    <property type="molecule type" value="Genomic_DNA"/>
</dbReference>
<dbReference type="RefSeq" id="WP_001831260.1">
    <property type="nucleotide sequence ID" value="NZ_MTGA01000038.1"/>
</dbReference>
<dbReference type="SMR" id="Q49XK3"/>
<dbReference type="GeneID" id="97287790"/>
<dbReference type="KEGG" id="ssp:SSP1349"/>
<dbReference type="eggNOG" id="COG1278">
    <property type="taxonomic scope" value="Bacteria"/>
</dbReference>
<dbReference type="HOGENOM" id="CLU_117621_6_1_9"/>
<dbReference type="OrthoDB" id="9805039at2"/>
<dbReference type="Proteomes" id="UP000006371">
    <property type="component" value="Chromosome"/>
</dbReference>
<dbReference type="GO" id="GO:0005737">
    <property type="term" value="C:cytoplasm"/>
    <property type="evidence" value="ECO:0007669"/>
    <property type="project" value="UniProtKB-SubCell"/>
</dbReference>
<dbReference type="GO" id="GO:0003676">
    <property type="term" value="F:nucleic acid binding"/>
    <property type="evidence" value="ECO:0007669"/>
    <property type="project" value="InterPro"/>
</dbReference>
<dbReference type="CDD" id="cd04458">
    <property type="entry name" value="CSP_CDS"/>
    <property type="match status" value="1"/>
</dbReference>
<dbReference type="FunFam" id="2.40.50.140:FF:000006">
    <property type="entry name" value="Cold shock protein CspC"/>
    <property type="match status" value="1"/>
</dbReference>
<dbReference type="Gene3D" id="6.20.370.130">
    <property type="match status" value="1"/>
</dbReference>
<dbReference type="Gene3D" id="2.40.50.140">
    <property type="entry name" value="Nucleic acid-binding proteins"/>
    <property type="match status" value="1"/>
</dbReference>
<dbReference type="InterPro" id="IPR012156">
    <property type="entry name" value="Cold_shock_CspA"/>
</dbReference>
<dbReference type="InterPro" id="IPR050181">
    <property type="entry name" value="Cold_shock_domain"/>
</dbReference>
<dbReference type="InterPro" id="IPR011129">
    <property type="entry name" value="CSD"/>
</dbReference>
<dbReference type="InterPro" id="IPR019844">
    <property type="entry name" value="CSD_CS"/>
</dbReference>
<dbReference type="InterPro" id="IPR002059">
    <property type="entry name" value="CSP_DNA-bd"/>
</dbReference>
<dbReference type="InterPro" id="IPR012340">
    <property type="entry name" value="NA-bd_OB-fold"/>
</dbReference>
<dbReference type="PANTHER" id="PTHR11544">
    <property type="entry name" value="COLD SHOCK DOMAIN CONTAINING PROTEINS"/>
    <property type="match status" value="1"/>
</dbReference>
<dbReference type="Pfam" id="PF00313">
    <property type="entry name" value="CSD"/>
    <property type="match status" value="1"/>
</dbReference>
<dbReference type="PIRSF" id="PIRSF002599">
    <property type="entry name" value="Cold_shock_A"/>
    <property type="match status" value="1"/>
</dbReference>
<dbReference type="PRINTS" id="PR00050">
    <property type="entry name" value="COLDSHOCK"/>
</dbReference>
<dbReference type="SMART" id="SM00357">
    <property type="entry name" value="CSP"/>
    <property type="match status" value="1"/>
</dbReference>
<dbReference type="SUPFAM" id="SSF50249">
    <property type="entry name" value="Nucleic acid-binding proteins"/>
    <property type="match status" value="1"/>
</dbReference>
<dbReference type="PROSITE" id="PS00352">
    <property type="entry name" value="CSD_1"/>
    <property type="match status" value="1"/>
</dbReference>
<dbReference type="PROSITE" id="PS51857">
    <property type="entry name" value="CSD_2"/>
    <property type="match status" value="1"/>
</dbReference>
<comment type="function">
    <text evidence="1">Involved in cold stress response.</text>
</comment>
<comment type="subcellular location">
    <subcellularLocation>
        <location evidence="1">Cytoplasm</location>
    </subcellularLocation>
</comment>
<reference key="1">
    <citation type="journal article" date="2005" name="Proc. Natl. Acad. Sci. U.S.A.">
        <title>Whole genome sequence of Staphylococcus saprophyticus reveals the pathogenesis of uncomplicated urinary tract infection.</title>
        <authorList>
            <person name="Kuroda M."/>
            <person name="Yamashita A."/>
            <person name="Hirakawa H."/>
            <person name="Kumano M."/>
            <person name="Morikawa K."/>
            <person name="Higashide M."/>
            <person name="Maruyama A."/>
            <person name="Inose Y."/>
            <person name="Matoba K."/>
            <person name="Toh H."/>
            <person name="Kuhara S."/>
            <person name="Hattori M."/>
            <person name="Ohta T."/>
        </authorList>
    </citation>
    <scope>NUCLEOTIDE SEQUENCE [LARGE SCALE GENOMIC DNA]</scope>
    <source>
        <strain>ATCC 15305 / DSM 20229 / NCIMB 8711 / NCTC 7292 / S-41</strain>
    </source>
</reference>
<sequence>MKQGTVKWFNAEKGFGFIEVEGENDVFVHFSAINQEGYKSLEEGQSVEFEVVEGDRGPQAANVVKL</sequence>
<feature type="chain" id="PRO_0000262550" description="Cold shock protein CspA">
    <location>
        <begin position="1"/>
        <end position="66"/>
    </location>
</feature>
<feature type="domain" description="CSD">
    <location>
        <begin position="1"/>
        <end position="66"/>
    </location>
</feature>
<proteinExistence type="inferred from homology"/>
<accession>Q49XK3</accession>
<organism>
    <name type="scientific">Staphylococcus saprophyticus subsp. saprophyticus (strain ATCC 15305 / DSM 20229 / NCIMB 8711 / NCTC 7292 / S-41)</name>
    <dbReference type="NCBI Taxonomy" id="342451"/>
    <lineage>
        <taxon>Bacteria</taxon>
        <taxon>Bacillati</taxon>
        <taxon>Bacillota</taxon>
        <taxon>Bacilli</taxon>
        <taxon>Bacillales</taxon>
        <taxon>Staphylococcaceae</taxon>
        <taxon>Staphylococcus</taxon>
    </lineage>
</organism>
<name>CSPA_STAS1</name>